<feature type="chain" id="PRO_0000093548" description="Long neurotoxin 2" evidence="3">
    <location>
        <begin position="1"/>
        <end position="71"/>
    </location>
</feature>
<feature type="disulfide bond" evidence="1">
    <location>
        <begin position="3"/>
        <end position="20"/>
    </location>
</feature>
<feature type="disulfide bond" evidence="1">
    <location>
        <begin position="14"/>
        <end position="41"/>
    </location>
</feature>
<feature type="disulfide bond" evidence="1">
    <location>
        <begin position="26"/>
        <end position="30"/>
    </location>
</feature>
<feature type="disulfide bond" evidence="1">
    <location>
        <begin position="45"/>
        <end position="56"/>
    </location>
</feature>
<feature type="disulfide bond" evidence="1">
    <location>
        <begin position="57"/>
        <end position="62"/>
    </location>
</feature>
<dbReference type="PIR" id="A91434">
    <property type="entry name" value="N2NJ1I"/>
</dbReference>
<dbReference type="SMR" id="P25669"/>
<dbReference type="Proteomes" id="UP000694559">
    <property type="component" value="Unplaced"/>
</dbReference>
<dbReference type="GO" id="GO:0005576">
    <property type="term" value="C:extracellular region"/>
    <property type="evidence" value="ECO:0007669"/>
    <property type="project" value="UniProtKB-SubCell"/>
</dbReference>
<dbReference type="GO" id="GO:0030550">
    <property type="term" value="F:acetylcholine receptor inhibitor activity"/>
    <property type="evidence" value="ECO:0007669"/>
    <property type="project" value="UniProtKB-KW"/>
</dbReference>
<dbReference type="GO" id="GO:0099106">
    <property type="term" value="F:ion channel regulator activity"/>
    <property type="evidence" value="ECO:0007669"/>
    <property type="project" value="UniProtKB-KW"/>
</dbReference>
<dbReference type="GO" id="GO:0090729">
    <property type="term" value="F:toxin activity"/>
    <property type="evidence" value="ECO:0007669"/>
    <property type="project" value="UniProtKB-KW"/>
</dbReference>
<dbReference type="CDD" id="cd00206">
    <property type="entry name" value="TFP_snake_toxin"/>
    <property type="match status" value="1"/>
</dbReference>
<dbReference type="Gene3D" id="2.10.60.10">
    <property type="entry name" value="CD59"/>
    <property type="match status" value="1"/>
</dbReference>
<dbReference type="InterPro" id="IPR003571">
    <property type="entry name" value="Snake_3FTx"/>
</dbReference>
<dbReference type="InterPro" id="IPR045860">
    <property type="entry name" value="Snake_toxin-like_sf"/>
</dbReference>
<dbReference type="InterPro" id="IPR018354">
    <property type="entry name" value="Snake_toxin_con_site"/>
</dbReference>
<dbReference type="InterPro" id="IPR054131">
    <property type="entry name" value="Toxin_cobra-type"/>
</dbReference>
<dbReference type="Pfam" id="PF21947">
    <property type="entry name" value="Toxin_cobra-type"/>
    <property type="match status" value="1"/>
</dbReference>
<dbReference type="SUPFAM" id="SSF57302">
    <property type="entry name" value="Snake toxin-like"/>
    <property type="match status" value="1"/>
</dbReference>
<dbReference type="PROSITE" id="PS00272">
    <property type="entry name" value="SNAKE_TOXIN"/>
    <property type="match status" value="1"/>
</dbReference>
<sequence>IRCFITPDITSKDCPNGHVCYTKTWCDGFCSSRGKRVDLGCAATCPTVRTGVDIQCCSTDDCDPFPTRKRP</sequence>
<name>3L22_NAJNA</name>
<accession>P25669</accession>
<accession>P01392</accession>
<reference key="1">
    <citation type="journal article" date="1976" name="FEBS Lett.">
        <title>The primary structure of toxin B from the venom of the Indian cobra Naja naja.</title>
        <authorList>
            <person name="Ohta M."/>
            <person name="Sasaki T."/>
            <person name="Hayashi K."/>
        </authorList>
    </citation>
    <scope>PROTEIN SEQUENCE</scope>
    <scope>SUBCELLULAR LOCATION</scope>
    <source>
        <tissue>Venom</tissue>
    </source>
</reference>
<protein>
    <recommendedName>
        <fullName>Long neurotoxin 2</fullName>
    </recommendedName>
    <alternativeName>
        <fullName evidence="4">Toxin B</fullName>
    </alternativeName>
</protein>
<comment type="function">
    <text evidence="2">Binds with high affinity to muscular (alpha-1/CHRNA1) and neuronal (alpha-7/CHRNA7) nicotinic acetylcholine receptor (nAChR) and inhibits acetylcholine from binding to the receptor, thereby impairing neuromuscular and neuronal transmission.</text>
</comment>
<comment type="subcellular location">
    <subcellularLocation>
        <location evidence="3">Secreted</location>
    </subcellularLocation>
</comment>
<comment type="tissue specificity">
    <text evidence="6">Expressed by the venom gland.</text>
</comment>
<comment type="similarity">
    <text evidence="5">Belongs to the three-finger toxin family. Long-chain subfamily. Type II alpha-neurotoxin sub-subfamily.</text>
</comment>
<proteinExistence type="evidence at protein level"/>
<keyword id="KW-0008">Acetylcholine receptor inhibiting toxin</keyword>
<keyword id="KW-0903">Direct protein sequencing</keyword>
<keyword id="KW-1015">Disulfide bond</keyword>
<keyword id="KW-0872">Ion channel impairing toxin</keyword>
<keyword id="KW-0528">Neurotoxin</keyword>
<keyword id="KW-0629">Postsynaptic neurotoxin</keyword>
<keyword id="KW-1185">Reference proteome</keyword>
<keyword id="KW-0964">Secreted</keyword>
<keyword id="KW-0800">Toxin</keyword>
<organism>
    <name type="scientific">Naja naja</name>
    <name type="common">Indian cobra</name>
    <dbReference type="NCBI Taxonomy" id="35670"/>
    <lineage>
        <taxon>Eukaryota</taxon>
        <taxon>Metazoa</taxon>
        <taxon>Chordata</taxon>
        <taxon>Craniata</taxon>
        <taxon>Vertebrata</taxon>
        <taxon>Euteleostomi</taxon>
        <taxon>Lepidosauria</taxon>
        <taxon>Squamata</taxon>
        <taxon>Bifurcata</taxon>
        <taxon>Unidentata</taxon>
        <taxon>Episquamata</taxon>
        <taxon>Toxicofera</taxon>
        <taxon>Serpentes</taxon>
        <taxon>Colubroidea</taxon>
        <taxon>Elapidae</taxon>
        <taxon>Elapinae</taxon>
        <taxon>Naja</taxon>
    </lineage>
</organism>
<evidence type="ECO:0000250" key="1">
    <source>
        <dbReference type="UniProtKB" id="P25671"/>
    </source>
</evidence>
<evidence type="ECO:0000250" key="2">
    <source>
        <dbReference type="UniProtKB" id="P60615"/>
    </source>
</evidence>
<evidence type="ECO:0000269" key="3">
    <source>
    </source>
</evidence>
<evidence type="ECO:0000303" key="4">
    <source>
    </source>
</evidence>
<evidence type="ECO:0000305" key="5"/>
<evidence type="ECO:0000305" key="6">
    <source>
    </source>
</evidence>